<dbReference type="EMBL" id="CP000802">
    <property type="protein sequence ID" value="ABV04417.1"/>
    <property type="molecule type" value="Genomic_DNA"/>
</dbReference>
<dbReference type="RefSeq" id="WP_001118464.1">
    <property type="nucleotide sequence ID" value="NC_009800.1"/>
</dbReference>
<dbReference type="BMRB" id="A7ZVV8"/>
<dbReference type="SMR" id="A7ZVV8"/>
<dbReference type="IntAct" id="A7ZVV8">
    <property type="interactions" value="1"/>
</dbReference>
<dbReference type="GeneID" id="93777428"/>
<dbReference type="KEGG" id="ecx:EcHS_A0016"/>
<dbReference type="HOGENOM" id="CLU_017633_0_7_6"/>
<dbReference type="GO" id="GO:0005737">
    <property type="term" value="C:cytoplasm"/>
    <property type="evidence" value="ECO:0007669"/>
    <property type="project" value="UniProtKB-SubCell"/>
</dbReference>
<dbReference type="GO" id="GO:0005524">
    <property type="term" value="F:ATP binding"/>
    <property type="evidence" value="ECO:0007669"/>
    <property type="project" value="InterPro"/>
</dbReference>
<dbReference type="GO" id="GO:0031072">
    <property type="term" value="F:heat shock protein binding"/>
    <property type="evidence" value="ECO:0007669"/>
    <property type="project" value="InterPro"/>
</dbReference>
<dbReference type="GO" id="GO:0051082">
    <property type="term" value="F:unfolded protein binding"/>
    <property type="evidence" value="ECO:0007669"/>
    <property type="project" value="UniProtKB-UniRule"/>
</dbReference>
<dbReference type="GO" id="GO:0008270">
    <property type="term" value="F:zinc ion binding"/>
    <property type="evidence" value="ECO:0007669"/>
    <property type="project" value="UniProtKB-UniRule"/>
</dbReference>
<dbReference type="GO" id="GO:0051085">
    <property type="term" value="P:chaperone cofactor-dependent protein refolding"/>
    <property type="evidence" value="ECO:0007669"/>
    <property type="project" value="TreeGrafter"/>
</dbReference>
<dbReference type="GO" id="GO:0006260">
    <property type="term" value="P:DNA replication"/>
    <property type="evidence" value="ECO:0007669"/>
    <property type="project" value="UniProtKB-KW"/>
</dbReference>
<dbReference type="GO" id="GO:0042026">
    <property type="term" value="P:protein refolding"/>
    <property type="evidence" value="ECO:0007669"/>
    <property type="project" value="TreeGrafter"/>
</dbReference>
<dbReference type="GO" id="GO:0009408">
    <property type="term" value="P:response to heat"/>
    <property type="evidence" value="ECO:0007669"/>
    <property type="project" value="InterPro"/>
</dbReference>
<dbReference type="CDD" id="cd06257">
    <property type="entry name" value="DnaJ"/>
    <property type="match status" value="1"/>
</dbReference>
<dbReference type="CDD" id="cd10747">
    <property type="entry name" value="DnaJ_C"/>
    <property type="match status" value="1"/>
</dbReference>
<dbReference type="CDD" id="cd10719">
    <property type="entry name" value="DnaJ_zf"/>
    <property type="match status" value="1"/>
</dbReference>
<dbReference type="FunFam" id="1.10.287.110:FF:000003">
    <property type="entry name" value="Molecular chaperone DnaJ"/>
    <property type="match status" value="1"/>
</dbReference>
<dbReference type="FunFam" id="2.10.230.10:FF:000002">
    <property type="entry name" value="Molecular chaperone DnaJ"/>
    <property type="match status" value="1"/>
</dbReference>
<dbReference type="FunFam" id="2.60.260.20:FF:000004">
    <property type="entry name" value="Molecular chaperone DnaJ"/>
    <property type="match status" value="1"/>
</dbReference>
<dbReference type="Gene3D" id="1.10.287.110">
    <property type="entry name" value="DnaJ domain"/>
    <property type="match status" value="1"/>
</dbReference>
<dbReference type="Gene3D" id="2.10.230.10">
    <property type="entry name" value="Heat shock protein DnaJ, cysteine-rich domain"/>
    <property type="match status" value="1"/>
</dbReference>
<dbReference type="Gene3D" id="2.60.260.20">
    <property type="entry name" value="Urease metallochaperone UreE, N-terminal domain"/>
    <property type="match status" value="2"/>
</dbReference>
<dbReference type="HAMAP" id="MF_01152">
    <property type="entry name" value="DnaJ"/>
    <property type="match status" value="1"/>
</dbReference>
<dbReference type="InterPro" id="IPR012724">
    <property type="entry name" value="DnaJ"/>
</dbReference>
<dbReference type="InterPro" id="IPR002939">
    <property type="entry name" value="DnaJ_C"/>
</dbReference>
<dbReference type="InterPro" id="IPR001623">
    <property type="entry name" value="DnaJ_domain"/>
</dbReference>
<dbReference type="InterPro" id="IPR018253">
    <property type="entry name" value="DnaJ_domain_CS"/>
</dbReference>
<dbReference type="InterPro" id="IPR008971">
    <property type="entry name" value="HSP40/DnaJ_pept-bd"/>
</dbReference>
<dbReference type="InterPro" id="IPR001305">
    <property type="entry name" value="HSP_DnaJ_Cys-rich_dom"/>
</dbReference>
<dbReference type="InterPro" id="IPR036410">
    <property type="entry name" value="HSP_DnaJ_Cys-rich_dom_sf"/>
</dbReference>
<dbReference type="InterPro" id="IPR036869">
    <property type="entry name" value="J_dom_sf"/>
</dbReference>
<dbReference type="NCBIfam" id="TIGR02349">
    <property type="entry name" value="DnaJ_bact"/>
    <property type="match status" value="1"/>
</dbReference>
<dbReference type="NCBIfam" id="NF008035">
    <property type="entry name" value="PRK10767.1"/>
    <property type="match status" value="1"/>
</dbReference>
<dbReference type="PANTHER" id="PTHR43096:SF48">
    <property type="entry name" value="CHAPERONE PROTEIN DNAJ"/>
    <property type="match status" value="1"/>
</dbReference>
<dbReference type="PANTHER" id="PTHR43096">
    <property type="entry name" value="DNAJ HOMOLOG 1, MITOCHONDRIAL-RELATED"/>
    <property type="match status" value="1"/>
</dbReference>
<dbReference type="Pfam" id="PF00226">
    <property type="entry name" value="DnaJ"/>
    <property type="match status" value="1"/>
</dbReference>
<dbReference type="Pfam" id="PF01556">
    <property type="entry name" value="DnaJ_C"/>
    <property type="match status" value="1"/>
</dbReference>
<dbReference type="Pfam" id="PF00684">
    <property type="entry name" value="DnaJ_CXXCXGXG"/>
    <property type="match status" value="1"/>
</dbReference>
<dbReference type="PRINTS" id="PR00625">
    <property type="entry name" value="JDOMAIN"/>
</dbReference>
<dbReference type="SMART" id="SM00271">
    <property type="entry name" value="DnaJ"/>
    <property type="match status" value="1"/>
</dbReference>
<dbReference type="SUPFAM" id="SSF46565">
    <property type="entry name" value="Chaperone J-domain"/>
    <property type="match status" value="1"/>
</dbReference>
<dbReference type="SUPFAM" id="SSF57938">
    <property type="entry name" value="DnaJ/Hsp40 cysteine-rich domain"/>
    <property type="match status" value="1"/>
</dbReference>
<dbReference type="SUPFAM" id="SSF49493">
    <property type="entry name" value="HSP40/DnaJ peptide-binding domain"/>
    <property type="match status" value="2"/>
</dbReference>
<dbReference type="PROSITE" id="PS00636">
    <property type="entry name" value="DNAJ_1"/>
    <property type="match status" value="1"/>
</dbReference>
<dbReference type="PROSITE" id="PS50076">
    <property type="entry name" value="DNAJ_2"/>
    <property type="match status" value="1"/>
</dbReference>
<dbReference type="PROSITE" id="PS51188">
    <property type="entry name" value="ZF_CR"/>
    <property type="match status" value="1"/>
</dbReference>
<evidence type="ECO:0000255" key="1">
    <source>
        <dbReference type="HAMAP-Rule" id="MF_01152"/>
    </source>
</evidence>
<accession>A7ZVV8</accession>
<sequence length="376" mass="41044">MAKQDYYEILGVSKTAEEREIKKAYKRLAMKYHPDRNQGDKEAEAKFKEIKEAYEVLTDSQKRAAYDQYGHAAFEQGGMGGGGFGGGADFSDIFGDVFGDIFGGGRGRQRAARGADLRYNMELTLEEAVRGVTKEIRIPTLEECDVCHGSGAKPGTQPQTCPTCHGSGQVQMRQGFFAVQQTCPHCQGRGTLIKDPCNKCHGHGRVERSKTLSVKIPAGVDTGDRIRLAGEGEAGEHGAPAGDLYVQVQVKQHPIFEREGNNLYCEVPINFAMAALGGEIEVPTLDGRVKLKVPGETQTGKLFRMRGKGVKSVRGGAQGDLLCRVVVETPVGLNEKQKQLLQELQESFGGPTGEHNSPRSKSFFDGVKKFFDDLTR</sequence>
<reference key="1">
    <citation type="journal article" date="2008" name="J. Bacteriol.">
        <title>The pangenome structure of Escherichia coli: comparative genomic analysis of E. coli commensal and pathogenic isolates.</title>
        <authorList>
            <person name="Rasko D.A."/>
            <person name="Rosovitz M.J."/>
            <person name="Myers G.S.A."/>
            <person name="Mongodin E.F."/>
            <person name="Fricke W.F."/>
            <person name="Gajer P."/>
            <person name="Crabtree J."/>
            <person name="Sebaihia M."/>
            <person name="Thomson N.R."/>
            <person name="Chaudhuri R."/>
            <person name="Henderson I.R."/>
            <person name="Sperandio V."/>
            <person name="Ravel J."/>
        </authorList>
    </citation>
    <scope>NUCLEOTIDE SEQUENCE [LARGE SCALE GENOMIC DNA]</scope>
    <source>
        <strain>HS</strain>
    </source>
</reference>
<name>DNAJ_ECOHS</name>
<keyword id="KW-0143">Chaperone</keyword>
<keyword id="KW-0963">Cytoplasm</keyword>
<keyword id="KW-0235">DNA replication</keyword>
<keyword id="KW-0479">Metal-binding</keyword>
<keyword id="KW-0677">Repeat</keyword>
<keyword id="KW-0346">Stress response</keyword>
<keyword id="KW-0862">Zinc</keyword>
<keyword id="KW-0863">Zinc-finger</keyword>
<protein>
    <recommendedName>
        <fullName evidence="1">Chaperone protein DnaJ</fullName>
    </recommendedName>
</protein>
<organism>
    <name type="scientific">Escherichia coli O9:H4 (strain HS)</name>
    <dbReference type="NCBI Taxonomy" id="331112"/>
    <lineage>
        <taxon>Bacteria</taxon>
        <taxon>Pseudomonadati</taxon>
        <taxon>Pseudomonadota</taxon>
        <taxon>Gammaproteobacteria</taxon>
        <taxon>Enterobacterales</taxon>
        <taxon>Enterobacteriaceae</taxon>
        <taxon>Escherichia</taxon>
    </lineage>
</organism>
<feature type="chain" id="PRO_1000085188" description="Chaperone protein DnaJ">
    <location>
        <begin position="1"/>
        <end position="376"/>
    </location>
</feature>
<feature type="domain" description="J" evidence="1">
    <location>
        <begin position="5"/>
        <end position="70"/>
    </location>
</feature>
<feature type="repeat" description="CXXCXGXG motif">
    <location>
        <begin position="144"/>
        <end position="151"/>
    </location>
</feature>
<feature type="repeat" description="CXXCXGXG motif">
    <location>
        <begin position="161"/>
        <end position="168"/>
    </location>
</feature>
<feature type="repeat" description="CXXCXGXG motif">
    <location>
        <begin position="183"/>
        <end position="190"/>
    </location>
</feature>
<feature type="repeat" description="CXXCXGXG motif">
    <location>
        <begin position="197"/>
        <end position="204"/>
    </location>
</feature>
<feature type="zinc finger region" description="CR-type" evidence="1">
    <location>
        <begin position="131"/>
        <end position="209"/>
    </location>
</feature>
<feature type="binding site" evidence="1">
    <location>
        <position position="144"/>
    </location>
    <ligand>
        <name>Zn(2+)</name>
        <dbReference type="ChEBI" id="CHEBI:29105"/>
        <label>1</label>
    </ligand>
</feature>
<feature type="binding site" evidence="1">
    <location>
        <position position="147"/>
    </location>
    <ligand>
        <name>Zn(2+)</name>
        <dbReference type="ChEBI" id="CHEBI:29105"/>
        <label>1</label>
    </ligand>
</feature>
<feature type="binding site" evidence="1">
    <location>
        <position position="161"/>
    </location>
    <ligand>
        <name>Zn(2+)</name>
        <dbReference type="ChEBI" id="CHEBI:29105"/>
        <label>2</label>
    </ligand>
</feature>
<feature type="binding site" evidence="1">
    <location>
        <position position="164"/>
    </location>
    <ligand>
        <name>Zn(2+)</name>
        <dbReference type="ChEBI" id="CHEBI:29105"/>
        <label>2</label>
    </ligand>
</feature>
<feature type="binding site" evidence="1">
    <location>
        <position position="183"/>
    </location>
    <ligand>
        <name>Zn(2+)</name>
        <dbReference type="ChEBI" id="CHEBI:29105"/>
        <label>2</label>
    </ligand>
</feature>
<feature type="binding site" evidence="1">
    <location>
        <position position="186"/>
    </location>
    <ligand>
        <name>Zn(2+)</name>
        <dbReference type="ChEBI" id="CHEBI:29105"/>
        <label>2</label>
    </ligand>
</feature>
<feature type="binding site" evidence="1">
    <location>
        <position position="197"/>
    </location>
    <ligand>
        <name>Zn(2+)</name>
        <dbReference type="ChEBI" id="CHEBI:29105"/>
        <label>1</label>
    </ligand>
</feature>
<feature type="binding site" evidence="1">
    <location>
        <position position="200"/>
    </location>
    <ligand>
        <name>Zn(2+)</name>
        <dbReference type="ChEBI" id="CHEBI:29105"/>
        <label>1</label>
    </ligand>
</feature>
<proteinExistence type="inferred from homology"/>
<comment type="function">
    <text evidence="1">Participates actively in the response to hyperosmotic and heat shock by preventing the aggregation of stress-denatured proteins and by disaggregating proteins, also in an autonomous, DnaK-independent fashion. Unfolded proteins bind initially to DnaJ; upon interaction with the DnaJ-bound protein, DnaK hydrolyzes its bound ATP, resulting in the formation of a stable complex. GrpE releases ADP from DnaK; ATP binding to DnaK triggers the release of the substrate protein, thus completing the reaction cycle. Several rounds of ATP-dependent interactions between DnaJ, DnaK and GrpE are required for fully efficient folding. Also involved, together with DnaK and GrpE, in the DNA replication of plasmids through activation of initiation proteins.</text>
</comment>
<comment type="cofactor">
    <cofactor evidence="1">
        <name>Zn(2+)</name>
        <dbReference type="ChEBI" id="CHEBI:29105"/>
    </cofactor>
    <text evidence="1">Binds 2 Zn(2+) ions per monomer.</text>
</comment>
<comment type="subunit">
    <text evidence="1">Homodimer.</text>
</comment>
<comment type="subcellular location">
    <subcellularLocation>
        <location evidence="1">Cytoplasm</location>
    </subcellularLocation>
</comment>
<comment type="domain">
    <text evidence="1">The J domain is necessary and sufficient to stimulate DnaK ATPase activity. Zinc center 1 plays an important role in the autonomous, DnaK-independent chaperone activity of DnaJ. Zinc center 2 is essential for interaction with DnaK and for DnaJ activity.</text>
</comment>
<comment type="similarity">
    <text evidence="1">Belongs to the DnaJ family.</text>
</comment>
<gene>
    <name evidence="1" type="primary">dnaJ</name>
    <name type="ordered locus">EcHS_A0016</name>
</gene>